<proteinExistence type="inferred from homology"/>
<name>NUOC_JANSC</name>
<accession>Q28T74</accession>
<evidence type="ECO:0000255" key="1">
    <source>
        <dbReference type="HAMAP-Rule" id="MF_01357"/>
    </source>
</evidence>
<gene>
    <name evidence="1" type="primary">nuoC</name>
    <name type="ordered locus">Jann_1171</name>
</gene>
<protein>
    <recommendedName>
        <fullName evidence="1">NADH-quinone oxidoreductase subunit C</fullName>
        <ecNumber evidence="1">7.1.1.-</ecNumber>
    </recommendedName>
    <alternativeName>
        <fullName evidence="1">NADH dehydrogenase I subunit C</fullName>
    </alternativeName>
    <alternativeName>
        <fullName evidence="1">NDH-1 subunit C</fullName>
    </alternativeName>
</protein>
<keyword id="KW-0997">Cell inner membrane</keyword>
<keyword id="KW-1003">Cell membrane</keyword>
<keyword id="KW-0472">Membrane</keyword>
<keyword id="KW-0520">NAD</keyword>
<keyword id="KW-0874">Quinone</keyword>
<keyword id="KW-1185">Reference proteome</keyword>
<keyword id="KW-1278">Translocase</keyword>
<keyword id="KW-0813">Transport</keyword>
<keyword id="KW-0830">Ubiquinone</keyword>
<dbReference type="EC" id="7.1.1.-" evidence="1"/>
<dbReference type="EMBL" id="CP000264">
    <property type="protein sequence ID" value="ABD54088.1"/>
    <property type="molecule type" value="Genomic_DNA"/>
</dbReference>
<dbReference type="RefSeq" id="WP_011454295.1">
    <property type="nucleotide sequence ID" value="NC_007802.1"/>
</dbReference>
<dbReference type="SMR" id="Q28T74"/>
<dbReference type="STRING" id="290400.Jann_1171"/>
<dbReference type="KEGG" id="jan:Jann_1171"/>
<dbReference type="eggNOG" id="COG0852">
    <property type="taxonomic scope" value="Bacteria"/>
</dbReference>
<dbReference type="HOGENOM" id="CLU_042628_2_1_5"/>
<dbReference type="OrthoDB" id="9803286at2"/>
<dbReference type="Proteomes" id="UP000008326">
    <property type="component" value="Chromosome"/>
</dbReference>
<dbReference type="GO" id="GO:0005886">
    <property type="term" value="C:plasma membrane"/>
    <property type="evidence" value="ECO:0007669"/>
    <property type="project" value="UniProtKB-SubCell"/>
</dbReference>
<dbReference type="GO" id="GO:0008137">
    <property type="term" value="F:NADH dehydrogenase (ubiquinone) activity"/>
    <property type="evidence" value="ECO:0007669"/>
    <property type="project" value="InterPro"/>
</dbReference>
<dbReference type="GO" id="GO:0050136">
    <property type="term" value="F:NADH:ubiquinone reductase (non-electrogenic) activity"/>
    <property type="evidence" value="ECO:0007669"/>
    <property type="project" value="UniProtKB-UniRule"/>
</dbReference>
<dbReference type="GO" id="GO:0048038">
    <property type="term" value="F:quinone binding"/>
    <property type="evidence" value="ECO:0007669"/>
    <property type="project" value="UniProtKB-KW"/>
</dbReference>
<dbReference type="Gene3D" id="3.30.460.80">
    <property type="entry name" value="NADH:ubiquinone oxidoreductase, 30kDa subunit"/>
    <property type="match status" value="1"/>
</dbReference>
<dbReference type="HAMAP" id="MF_01357">
    <property type="entry name" value="NDH1_NuoC"/>
    <property type="match status" value="1"/>
</dbReference>
<dbReference type="InterPro" id="IPR010218">
    <property type="entry name" value="NADH_DH_suC"/>
</dbReference>
<dbReference type="InterPro" id="IPR037232">
    <property type="entry name" value="NADH_quin_OxRdtase_su_C/D-like"/>
</dbReference>
<dbReference type="InterPro" id="IPR001268">
    <property type="entry name" value="NADH_UbQ_OxRdtase_30kDa_su"/>
</dbReference>
<dbReference type="InterPro" id="IPR020396">
    <property type="entry name" value="NADH_UbQ_OxRdtase_CS"/>
</dbReference>
<dbReference type="NCBIfam" id="TIGR01961">
    <property type="entry name" value="NuoC_fam"/>
    <property type="match status" value="1"/>
</dbReference>
<dbReference type="NCBIfam" id="NF004733">
    <property type="entry name" value="PRK06074.1-5"/>
    <property type="match status" value="1"/>
</dbReference>
<dbReference type="PANTHER" id="PTHR10884:SF14">
    <property type="entry name" value="NADH DEHYDROGENASE [UBIQUINONE] IRON-SULFUR PROTEIN 3, MITOCHONDRIAL"/>
    <property type="match status" value="1"/>
</dbReference>
<dbReference type="PANTHER" id="PTHR10884">
    <property type="entry name" value="NADH DEHYDROGENASE UBIQUINONE IRON-SULFUR PROTEIN 3"/>
    <property type="match status" value="1"/>
</dbReference>
<dbReference type="Pfam" id="PF00329">
    <property type="entry name" value="Complex1_30kDa"/>
    <property type="match status" value="1"/>
</dbReference>
<dbReference type="SUPFAM" id="SSF143243">
    <property type="entry name" value="Nqo5-like"/>
    <property type="match status" value="1"/>
</dbReference>
<dbReference type="PROSITE" id="PS00542">
    <property type="entry name" value="COMPLEX1_30K"/>
    <property type="match status" value="1"/>
</dbReference>
<comment type="function">
    <text evidence="1">NDH-1 shuttles electrons from NADH, via FMN and iron-sulfur (Fe-S) centers, to quinones in the respiratory chain. The immediate electron acceptor for the enzyme in this species is believed to be ubiquinone. Couples the redox reaction to proton translocation (for every two electrons transferred, four hydrogen ions are translocated across the cytoplasmic membrane), and thus conserves the redox energy in a proton gradient.</text>
</comment>
<comment type="catalytic activity">
    <reaction evidence="1">
        <text>a quinone + NADH + 5 H(+)(in) = a quinol + NAD(+) + 4 H(+)(out)</text>
        <dbReference type="Rhea" id="RHEA:57888"/>
        <dbReference type="ChEBI" id="CHEBI:15378"/>
        <dbReference type="ChEBI" id="CHEBI:24646"/>
        <dbReference type="ChEBI" id="CHEBI:57540"/>
        <dbReference type="ChEBI" id="CHEBI:57945"/>
        <dbReference type="ChEBI" id="CHEBI:132124"/>
    </reaction>
</comment>
<comment type="subunit">
    <text evidence="1">NDH-1 is composed of 14 different subunits. Subunits NuoB, C, D, E, F, and G constitute the peripheral sector of the complex.</text>
</comment>
<comment type="subcellular location">
    <subcellularLocation>
        <location evidence="1">Cell inner membrane</location>
        <topology evidence="1">Peripheral membrane protein</topology>
        <orientation evidence="1">Cytoplasmic side</orientation>
    </subcellularLocation>
</comment>
<comment type="similarity">
    <text evidence="1">Belongs to the complex I 30 kDa subunit family.</text>
</comment>
<sequence length="207" mass="23860">MSDALKELAEYLSEKRSDDVVSTDVNAMGELSVTVAPAQMVGFIEFLKTDRTCRFSTLIDITAVDYPSRDRRFDVVYHFLSMYQNHRVRVRAAIREEDTLPSISGVHPGAGWYEREIYDMFGILFTGHADLRRLLTDYGFRGHPLRKDFPTTGYTEVRYDEELKRVVYEPVSLVQEYRQFDFMSPWEGAQYVLPGDEKADDKAGETA</sequence>
<reference key="1">
    <citation type="submission" date="2006-02" db="EMBL/GenBank/DDBJ databases">
        <title>Complete sequence of chromosome of Jannaschia sp. CCS1.</title>
        <authorList>
            <consortium name="US DOE Joint Genome Institute"/>
            <person name="Copeland A."/>
            <person name="Lucas S."/>
            <person name="Lapidus A."/>
            <person name="Barry K."/>
            <person name="Detter J.C."/>
            <person name="Glavina del Rio T."/>
            <person name="Hammon N."/>
            <person name="Israni S."/>
            <person name="Pitluck S."/>
            <person name="Brettin T."/>
            <person name="Bruce D."/>
            <person name="Han C."/>
            <person name="Tapia R."/>
            <person name="Gilna P."/>
            <person name="Chertkov O."/>
            <person name="Saunders E."/>
            <person name="Schmutz J."/>
            <person name="Larimer F."/>
            <person name="Land M."/>
            <person name="Kyrpides N."/>
            <person name="Lykidis A."/>
            <person name="Moran M.A."/>
            <person name="Belas R."/>
            <person name="Ye W."/>
            <person name="Buchan A."/>
            <person name="Gonzalez J.M."/>
            <person name="Schell M.A."/>
            <person name="Richardson P."/>
        </authorList>
    </citation>
    <scope>NUCLEOTIDE SEQUENCE [LARGE SCALE GENOMIC DNA]</scope>
    <source>
        <strain>CCS1</strain>
    </source>
</reference>
<feature type="chain" id="PRO_1000166672" description="NADH-quinone oxidoreductase subunit C">
    <location>
        <begin position="1"/>
        <end position="207"/>
    </location>
</feature>
<organism>
    <name type="scientific">Jannaschia sp. (strain CCS1)</name>
    <dbReference type="NCBI Taxonomy" id="290400"/>
    <lineage>
        <taxon>Bacteria</taxon>
        <taxon>Pseudomonadati</taxon>
        <taxon>Pseudomonadota</taxon>
        <taxon>Alphaproteobacteria</taxon>
        <taxon>Rhodobacterales</taxon>
        <taxon>Roseobacteraceae</taxon>
        <taxon>Jannaschia</taxon>
    </lineage>
</organism>